<feature type="chain" id="PRO_0000065879" description="Intermembrane lipid transfer protein vps1302">
    <location>
        <begin position="1"/>
        <end position="3131"/>
    </location>
</feature>
<feature type="domain" description="Chorein N-terminal" evidence="3">
    <location>
        <begin position="2"/>
        <end position="115"/>
    </location>
</feature>
<feature type="domain" description="SHR-BD" evidence="3">
    <location>
        <begin position="2085"/>
        <end position="2363"/>
    </location>
</feature>
<feature type="region of interest" description="Disordered" evidence="4">
    <location>
        <begin position="774"/>
        <end position="807"/>
    </location>
</feature>
<feature type="compositionally biased region" description="Basic and acidic residues" evidence="4">
    <location>
        <begin position="774"/>
        <end position="801"/>
    </location>
</feature>
<feature type="sequence conflict" description="In Ref. 2; BAA13854." evidence="5" ref="2">
    <original>T</original>
    <variation>P</variation>
    <location>
        <position position="3002"/>
    </location>
</feature>
<feature type="sequence conflict" description="In Ref. 2; BAA13854." evidence="5" ref="2">
    <original>H</original>
    <variation>T</variation>
    <location>
        <position position="3076"/>
    </location>
</feature>
<feature type="sequence conflict" description="In Ref. 2; BAA13854." evidence="5" ref="2">
    <original>K</original>
    <variation>E</variation>
    <location>
        <position position="3115"/>
    </location>
</feature>
<evidence type="ECO:0000250" key="1"/>
<evidence type="ECO:0000250" key="2">
    <source>
        <dbReference type="UniProtKB" id="Q07878"/>
    </source>
</evidence>
<evidence type="ECO:0000255" key="3"/>
<evidence type="ECO:0000256" key="4">
    <source>
        <dbReference type="SAM" id="MobiDB-lite"/>
    </source>
</evidence>
<evidence type="ECO:0000305" key="5"/>
<evidence type="ECO:0000312" key="6">
    <source>
        <dbReference type="PomBase" id="SPBC16C6.02c"/>
    </source>
</evidence>
<name>VP13B_SCHPO</name>
<proteinExistence type="evidence at transcript level"/>
<dbReference type="EMBL" id="CU329671">
    <property type="protein sequence ID" value="CAA16910.2"/>
    <property type="status" value="ALT_SEQ"/>
    <property type="molecule type" value="Genomic_DNA"/>
</dbReference>
<dbReference type="EMBL" id="D89192">
    <property type="protein sequence ID" value="BAA13854.1"/>
    <property type="molecule type" value="mRNA"/>
</dbReference>
<dbReference type="PIR" id="T39553">
    <property type="entry name" value="T39553"/>
</dbReference>
<dbReference type="PIR" id="T42752">
    <property type="entry name" value="T42752"/>
</dbReference>
<dbReference type="RefSeq" id="NP_596800.2">
    <property type="nucleotide sequence ID" value="NM_001023821.2"/>
</dbReference>
<dbReference type="SMR" id="O42926"/>
<dbReference type="FunCoup" id="O42926">
    <property type="interactions" value="169"/>
</dbReference>
<dbReference type="STRING" id="284812.O42926"/>
<dbReference type="iPTMnet" id="O42926"/>
<dbReference type="SwissPalm" id="O42926"/>
<dbReference type="PaxDb" id="4896-SPBC16C6.02c.1"/>
<dbReference type="GeneID" id="2540138"/>
<dbReference type="KEGG" id="spo:2540138"/>
<dbReference type="PomBase" id="SPBC16C6.02c">
    <property type="gene designation" value="vps1302"/>
</dbReference>
<dbReference type="eggNOG" id="KOG1809">
    <property type="taxonomic scope" value="Eukaryota"/>
</dbReference>
<dbReference type="HOGENOM" id="CLU_000135_0_0_1"/>
<dbReference type="InParanoid" id="O42926"/>
<dbReference type="PhylomeDB" id="O42926"/>
<dbReference type="PRO" id="PR:O42926"/>
<dbReference type="Proteomes" id="UP000002485">
    <property type="component" value="Chromosome II"/>
</dbReference>
<dbReference type="GO" id="GO:0005768">
    <property type="term" value="C:endosome"/>
    <property type="evidence" value="ECO:0000266"/>
    <property type="project" value="PomBase"/>
</dbReference>
<dbReference type="GO" id="GO:0005794">
    <property type="term" value="C:Golgi apparatus"/>
    <property type="evidence" value="ECO:0007669"/>
    <property type="project" value="UniProtKB-SubCell"/>
</dbReference>
<dbReference type="GO" id="GO:0005543">
    <property type="term" value="F:phospholipid binding"/>
    <property type="evidence" value="ECO:0000250"/>
    <property type="project" value="UniProtKB"/>
</dbReference>
<dbReference type="GO" id="GO:0120014">
    <property type="term" value="F:phospholipid transfer activity"/>
    <property type="evidence" value="ECO:0000250"/>
    <property type="project" value="UniProtKB"/>
</dbReference>
<dbReference type="GO" id="GO:0120009">
    <property type="term" value="P:intermembrane lipid transfer"/>
    <property type="evidence" value="ECO:0000250"/>
    <property type="project" value="UniProtKB"/>
</dbReference>
<dbReference type="GO" id="GO:0120010">
    <property type="term" value="P:intermembrane phospholipid transfer"/>
    <property type="evidence" value="ECO:0000304"/>
    <property type="project" value="PomBase"/>
</dbReference>
<dbReference type="GO" id="GO:0045324">
    <property type="term" value="P:late endosome to vacuole transport"/>
    <property type="evidence" value="ECO:0000318"/>
    <property type="project" value="GO_Central"/>
</dbReference>
<dbReference type="GO" id="GO:0007005">
    <property type="term" value="P:mitochondrion organization"/>
    <property type="evidence" value="ECO:0000318"/>
    <property type="project" value="GO_Central"/>
</dbReference>
<dbReference type="GO" id="GO:0045053">
    <property type="term" value="P:protein retention in Golgi apparatus"/>
    <property type="evidence" value="ECO:0000318"/>
    <property type="project" value="GO_Central"/>
</dbReference>
<dbReference type="GO" id="GO:0006623">
    <property type="term" value="P:protein targeting to vacuole"/>
    <property type="evidence" value="ECO:0000318"/>
    <property type="project" value="GO_Central"/>
</dbReference>
<dbReference type="InterPro" id="IPR026847">
    <property type="entry name" value="VPS13"/>
</dbReference>
<dbReference type="InterPro" id="IPR056748">
    <property type="entry name" value="VPS13-like_C"/>
</dbReference>
<dbReference type="InterPro" id="IPR056747">
    <property type="entry name" value="VPS13-like_M"/>
</dbReference>
<dbReference type="InterPro" id="IPR017148">
    <property type="entry name" value="VPS13_fungi"/>
</dbReference>
<dbReference type="InterPro" id="IPR026854">
    <property type="entry name" value="VPS13_N"/>
</dbReference>
<dbReference type="InterPro" id="IPR009543">
    <property type="entry name" value="VPS13_VAB"/>
</dbReference>
<dbReference type="PANTHER" id="PTHR16166:SF93">
    <property type="entry name" value="INTERMEMBRANE LIPID TRANSFER PROTEIN VPS13"/>
    <property type="match status" value="1"/>
</dbReference>
<dbReference type="PANTHER" id="PTHR16166">
    <property type="entry name" value="VACUOLAR PROTEIN SORTING-ASSOCIATED PROTEIN VPS13"/>
    <property type="match status" value="1"/>
</dbReference>
<dbReference type="Pfam" id="PF25037">
    <property type="entry name" value="VPS13_C"/>
    <property type="match status" value="1"/>
</dbReference>
<dbReference type="Pfam" id="PF25033">
    <property type="entry name" value="VPS13_M"/>
    <property type="match status" value="1"/>
</dbReference>
<dbReference type="Pfam" id="PF12624">
    <property type="entry name" value="VPS13_N"/>
    <property type="match status" value="1"/>
</dbReference>
<dbReference type="Pfam" id="PF25036">
    <property type="entry name" value="VPS13_VAB"/>
    <property type="match status" value="1"/>
</dbReference>
<dbReference type="PIRSF" id="PIRSF037235">
    <property type="entry name" value="VPS13_fungi"/>
    <property type="match status" value="1"/>
</dbReference>
<comment type="function">
    <text evidence="2">Mediates the transfer of lipids between membranes at organelle contact sites (By similarity). May play a role in mitochondrial lipid homeostasis, Golgi vesicle transport, reticulophagy, actin cytoskeleton organization and formation of the forespore membrane (By similarity).</text>
</comment>
<comment type="subcellular location">
    <subcellularLocation>
        <location evidence="1">Golgi apparatus</location>
        <location evidence="1">trans-Golgi network</location>
    </subcellularLocation>
</comment>
<comment type="similarity">
    <text evidence="5">Belongs to the VPS13 family.</text>
</comment>
<comment type="sequence caution" evidence="5">
    <conflict type="erroneous gene model prediction">
        <sequence resource="EMBL-CDS" id="CAA16910"/>
    </conflict>
</comment>
<gene>
    <name evidence="6" type="primary">vps1302</name>
    <name evidence="6" type="synonym">vps13b</name>
    <name evidence="6" type="ORF">SPBC16C6.02c</name>
</gene>
<reference key="1">
    <citation type="journal article" date="2002" name="Nature">
        <title>The genome sequence of Schizosaccharomyces pombe.</title>
        <authorList>
            <person name="Wood V."/>
            <person name="Gwilliam R."/>
            <person name="Rajandream M.A."/>
            <person name="Lyne M.H."/>
            <person name="Lyne R."/>
            <person name="Stewart A."/>
            <person name="Sgouros J.G."/>
            <person name="Peat N."/>
            <person name="Hayles J."/>
            <person name="Baker S.G."/>
            <person name="Basham D."/>
            <person name="Bowman S."/>
            <person name="Brooks K."/>
            <person name="Brown D."/>
            <person name="Brown S."/>
            <person name="Chillingworth T."/>
            <person name="Churcher C.M."/>
            <person name="Collins M."/>
            <person name="Connor R."/>
            <person name="Cronin A."/>
            <person name="Davis P."/>
            <person name="Feltwell T."/>
            <person name="Fraser A."/>
            <person name="Gentles S."/>
            <person name="Goble A."/>
            <person name="Hamlin N."/>
            <person name="Harris D.E."/>
            <person name="Hidalgo J."/>
            <person name="Hodgson G."/>
            <person name="Holroyd S."/>
            <person name="Hornsby T."/>
            <person name="Howarth S."/>
            <person name="Huckle E.J."/>
            <person name="Hunt S."/>
            <person name="Jagels K."/>
            <person name="James K.D."/>
            <person name="Jones L."/>
            <person name="Jones M."/>
            <person name="Leather S."/>
            <person name="McDonald S."/>
            <person name="McLean J."/>
            <person name="Mooney P."/>
            <person name="Moule S."/>
            <person name="Mungall K.L."/>
            <person name="Murphy L.D."/>
            <person name="Niblett D."/>
            <person name="Odell C."/>
            <person name="Oliver K."/>
            <person name="O'Neil S."/>
            <person name="Pearson D."/>
            <person name="Quail M.A."/>
            <person name="Rabbinowitsch E."/>
            <person name="Rutherford K.M."/>
            <person name="Rutter S."/>
            <person name="Saunders D."/>
            <person name="Seeger K."/>
            <person name="Sharp S."/>
            <person name="Skelton J."/>
            <person name="Simmonds M.N."/>
            <person name="Squares R."/>
            <person name="Squares S."/>
            <person name="Stevens K."/>
            <person name="Taylor K."/>
            <person name="Taylor R.G."/>
            <person name="Tivey A."/>
            <person name="Walsh S.V."/>
            <person name="Warren T."/>
            <person name="Whitehead S."/>
            <person name="Woodward J.R."/>
            <person name="Volckaert G."/>
            <person name="Aert R."/>
            <person name="Robben J."/>
            <person name="Grymonprez B."/>
            <person name="Weltjens I."/>
            <person name="Vanstreels E."/>
            <person name="Rieger M."/>
            <person name="Schaefer M."/>
            <person name="Mueller-Auer S."/>
            <person name="Gabel C."/>
            <person name="Fuchs M."/>
            <person name="Duesterhoeft A."/>
            <person name="Fritzc C."/>
            <person name="Holzer E."/>
            <person name="Moestl D."/>
            <person name="Hilbert H."/>
            <person name="Borzym K."/>
            <person name="Langer I."/>
            <person name="Beck A."/>
            <person name="Lehrach H."/>
            <person name="Reinhardt R."/>
            <person name="Pohl T.M."/>
            <person name="Eger P."/>
            <person name="Zimmermann W."/>
            <person name="Wedler H."/>
            <person name="Wambutt R."/>
            <person name="Purnelle B."/>
            <person name="Goffeau A."/>
            <person name="Cadieu E."/>
            <person name="Dreano S."/>
            <person name="Gloux S."/>
            <person name="Lelaure V."/>
            <person name="Mottier S."/>
            <person name="Galibert F."/>
            <person name="Aves S.J."/>
            <person name="Xiang Z."/>
            <person name="Hunt C."/>
            <person name="Moore K."/>
            <person name="Hurst S.M."/>
            <person name="Lucas M."/>
            <person name="Rochet M."/>
            <person name="Gaillardin C."/>
            <person name="Tallada V.A."/>
            <person name="Garzon A."/>
            <person name="Thode G."/>
            <person name="Daga R.R."/>
            <person name="Cruzado L."/>
            <person name="Jimenez J."/>
            <person name="Sanchez M."/>
            <person name="del Rey F."/>
            <person name="Benito J."/>
            <person name="Dominguez A."/>
            <person name="Revuelta J.L."/>
            <person name="Moreno S."/>
            <person name="Armstrong J."/>
            <person name="Forsburg S.L."/>
            <person name="Cerutti L."/>
            <person name="Lowe T."/>
            <person name="McCombie W.R."/>
            <person name="Paulsen I."/>
            <person name="Potashkin J."/>
            <person name="Shpakovski G.V."/>
            <person name="Ussery D."/>
            <person name="Barrell B.G."/>
            <person name="Nurse P."/>
        </authorList>
    </citation>
    <scope>NUCLEOTIDE SEQUENCE [LARGE SCALE GENOMIC DNA]</scope>
    <source>
        <strain>972 / ATCC 24843</strain>
    </source>
</reference>
<reference key="2">
    <citation type="journal article" date="1997" name="DNA Res.">
        <title>Identification of open reading frames in Schizosaccharomyces pombe cDNAs.</title>
        <authorList>
            <person name="Yoshioka S."/>
            <person name="Kato K."/>
            <person name="Nakai K."/>
            <person name="Okayama H."/>
            <person name="Nojima H."/>
        </authorList>
    </citation>
    <scope>NUCLEOTIDE SEQUENCE [LARGE SCALE MRNA] OF 2999-3131</scope>
    <source>
        <strain>PR745</strain>
    </source>
</reference>
<keyword id="KW-0333">Golgi apparatus</keyword>
<keyword id="KW-0445">Lipid transport</keyword>
<keyword id="KW-1185">Reference proteome</keyword>
<keyword id="KW-0813">Transport</keyword>
<organism>
    <name type="scientific">Schizosaccharomyces pombe (strain 972 / ATCC 24843)</name>
    <name type="common">Fission yeast</name>
    <dbReference type="NCBI Taxonomy" id="284812"/>
    <lineage>
        <taxon>Eukaryota</taxon>
        <taxon>Fungi</taxon>
        <taxon>Dikarya</taxon>
        <taxon>Ascomycota</taxon>
        <taxon>Taphrinomycotina</taxon>
        <taxon>Schizosaccharomycetes</taxon>
        <taxon>Schizosaccharomycetales</taxon>
        <taxon>Schizosaccharomycetaceae</taxon>
        <taxon>Schizosaccharomyces</taxon>
    </lineage>
</organism>
<accession>O42926</accession>
<accession>P78843</accession>
<sequence>MLEGLLANFLNRLLGEYIENFDATQLKVAVWNGDVTLRNLQLKRSAFRKLELPISVQYGLVEELTLKIPWSSLKNKPVEIYIVGIRALASMEENVKSQSEVDPHQVLESKRRQMQLWEASQIGKAETAYDPKTQTFTESLITRMIDNIQINIRDIHIRFEHLPVSNVVPGGYSFGLLLSEFSIESCNEEWTSTFVETESQTIYKLCSLRGFGIYSDETAECIDKTDINELMNTFQALITDFQSREKDYIIAPVTGMAKVTINKLPTPEIPRFLSQISFRGFDVSLNDSQISCGMSLAHELQDVMSKLAFRKRIVGNVSLDTPLDYLRFIFQKTLHDIQQKHYARSWPAIKAFCEKRRNYIKLYKKKFLAVQLSADESKELDVLELNLDISQLKLFRSLAYQEIKNEGFEPQPPKQQGWGSWMWNSFRGASDENGEVTDDQRKTVIDAIGLNDSIIESAHVGDLQSNTSLFDVRLEVPSGKFSLLKYPKKENVISLELLNFFSQFKCNKKDYSFVANLGSLKMYNDDRNFLYPRETSNKEIETTSPSIFTLSFERSSSDDNDTDTLGINLRALEFFYDPNLLLRVKGFQSSLFANDNGRKLVRLANDAVTDFTSQTVQNLQEYLNEKRKLNVNFQFQTPLLIFPEDCNNPESFSLFVDAGFISITSQNVETNDKESNSESETLYHLIYDRYRVSLESARLLLGPLNELKNESNKINEEYYLMNELNTEIFIQAQRVPTPQYPRIKVEGNMPCLSFILSDAQFRILNNLASTMLKDGKASDDDDNGDWRPESSESLDSHESEYKLNNTPSEQSVKVSHFFEFNMKLGEVTLILCREDSQTKRNSMVSVNFAKLLLSFNQFEDNSHLRMSINSFHINDMLSKSSRDNNRQLMRCYAPDSVDAENTPVIVEIKSVKAGENQSETNTTVDFLCANGDFYLAKFSILTLIEFLPSFAPPPSNDKQSTPQVSNSAAGKMELNFKIHKIGLRLLENYESKPICIDLLALDLSVNSTKGISEVESRVDKIQVMAWDHEKDEIVTLIDSKQDSLFDLKCKMQEGWFIHSPNPSTDVNIKMGSFTMLCHKQPIEEILNYASNFGHYKAIVQSVKYLAETGTHQVQQGTNVNINLYISNPIFQIPLTLENGSSAMVEILPGSFSLKTPSWLPNLTLNLESKSTTLRTIYYSKDFDEKGNQITVLDDLNISLDGSIVQAVDSAITNYAIDLHCGISELLIHLSQAQYLILLKLASNLPEMLSIANAFSANVDAPSVMTLLSEELYSIDTVNDAISNLSQNSSFDMKFGLHFPKISLNLYDGTFITPENSLSPLSNFTLNEIRAEGSYDLKTGASALIKMASLAIEDVRSEKSRYFSNVIIPSTDTESQLQVSFQYKPDTSSILLEGDIFKSMYVLSLDHLLSIYYWFGQPLMEKKLESPDDVQSLQAESSVSTPAVTAASEKSISLSVRFDIRNTSLVFVADASKSTSQAIVLRTDQISLVKQLSYSLTVQKMGMFVTRMDKLDDGIQILDDFDIGFGLVQDCSENKSFSATLDLDRLLFRISVYDLLLLQSIAQASVSVISSYKDKSSSISENMNSGDYGQQILNASNIAAVQQKAEQTATTLLTVLGHDSLISEEFTINSAGIQLILISDAHCLPVFDFTIENFNVLVKDWSTNLSATTSLTLHCNAFNFAKSHWEPVIEPWTFSTTAIMKDGMHEVNINSDDIAQISLTPMMVTDVHRLIKFYLTNQENNIEKRPEGYPYVILNQTGYNLSIQYGNLNSSEMQSLSLPSGKCVPCRFESKEVLTSRMSSKVQDVATKVRVSFDSTWYPVDEVSVHQEGSFLYELKPRIDQRTFLLVTVVLLESNIKQIILSSPYSIVNRTKEVIEVVCNDRSGHRQSSVIKIDPNETGYVPLDLACLYPLRIRPVSKLGFLWSNQIVDWHSLNKSPLQYLTCESTSTSWKHNLLVFARNLMDGSLQNDYPFLQLNILPTLQIENLLPYEINLRIIERSSGNDWRSSLSPGDSLPILHTDSKSFLLMGINVPDLDLQPVDLPIIYTPISSGQDVQTSALLTASDKQDVVKLILKYEKLPGTNYVSKVMIYPPYVIFNHTDLSIQVTSSSPNSIRYTIPSGSYSNDIKPYFYSFDESGRKNRAMISIDNGTSWSADIGFDTLGSSSQVEVRKTNESDVCLLGMSISESSGKFCLTKSVTFTPRFVFKNHLDCTVSLREFGSSKVLHLPSNELIPMMYFSNPQEIALLLSLPSSNNHWTSPFLAQNVGIVHLKAFEFDDDDNNMSTTLLRLCVTLEDATFFVTITKEDKAWPFRLKNCTSREICYEQKRPDPESVDSRFLQGSRSMKYALNPGEEANYSWDFPILKSKLLQVEVGKAIHDLDISSVGQLEPWHPTELDQKIRIHPEVKVDSLTSLVTFNEIDLSKPKLPSRTNSNVKGSIVEQKFKLVLQLKGFGISLIDKKYEEFAYATLKNFTFRFDDSKDLNTFGMSLGWLQIDNQMLDSVYPIALFPTMITQEVKQDDPQLLQLRFSVLKDSSFNILYIKYASLLLQELSLEVEDRLVLTLLQLLYPSSDVSKDSASLSKNAFADKFEIPDLDADVYRSNVFFETLHLQPTRLNISFETSYESDQPAVKSSNPTLDFMTGILISTLGNIHDAPVQLNSILLENARGTLSEMANRVASHYKQQVGYQIYKIAGRADFLGNPVGLFNNVASGVFDMFYEPYQGFLLQDSQSFGDSFARGTSSFMRKTIYGVSDSVSKITGTISKGLSTMTMDPKYQNSRRRFRSRNRPKEAVYGVTAGANSFYDSMSSGFKGLKKPFTDPKNNSAGKFLKGFGKGMLGLATKPAIGLLDMTSNVSEGIRNSTDVRTNPEIDKVRVPRYVEFGGLIVPFKPYESLGKYMLSCLDDGKYAFDEYLYHAEIQNVDILYISTKHFIITGSNYIVKIAVPVKQISGLRVSEHDLNSSCLFTFAVFWQRCESLFDCEYLSTPNLELFVKEKKKPIMSITMSDSSAYGEELMRERFEHLLKAYEKMALMVAEQEEFNAKIEDMALKLLSEKYDNEAYQAELFYRLSNCVEKVLHNKISITDLKTEYEEILEQTLKKECKAYERSCIENVKLKKRTEQATAYYASSSSEP</sequence>
<protein>
    <recommendedName>
        <fullName evidence="5">Intermembrane lipid transfer protein vps1302</fullName>
    </recommendedName>
    <alternativeName>
        <fullName>Vacuolar protein sorting-associated protein 13b</fullName>
    </alternativeName>
</protein>